<comment type="function">
    <text evidence="1">Required for formate dehydrogenase (FDH) activity. Acts as a sulfur carrier protein that transfers sulfur from IscS to the molybdenum cofactor prior to its insertion into FDH.</text>
</comment>
<comment type="subcellular location">
    <subcellularLocation>
        <location evidence="1">Cytoplasm</location>
    </subcellularLocation>
</comment>
<comment type="similarity">
    <text evidence="1">Belongs to the FdhD family.</text>
</comment>
<feature type="chain" id="PRO_0000152919" description="Sulfur carrier protein FdhD">
    <location>
        <begin position="1"/>
        <end position="278"/>
    </location>
</feature>
<feature type="active site" description="Cysteine persulfide intermediate" evidence="1">
    <location>
        <position position="121"/>
    </location>
</feature>
<feature type="binding site" evidence="1">
    <location>
        <begin position="260"/>
        <end position="265"/>
    </location>
    <ligand>
        <name>Mo-bis(molybdopterin guanine dinucleotide)</name>
        <dbReference type="ChEBI" id="CHEBI:60539"/>
    </ligand>
</feature>
<organism>
    <name type="scientific">Salmonella typhimurium (strain LT2 / SGSC1412 / ATCC 700720)</name>
    <dbReference type="NCBI Taxonomy" id="99287"/>
    <lineage>
        <taxon>Bacteria</taxon>
        <taxon>Pseudomonadati</taxon>
        <taxon>Pseudomonadota</taxon>
        <taxon>Gammaproteobacteria</taxon>
        <taxon>Enterobacterales</taxon>
        <taxon>Enterobacteriaceae</taxon>
        <taxon>Salmonella</taxon>
    </lineage>
</organism>
<sequence length="278" mass="30270">MNNILSEEVLNVTDFTTSRQLTLWKREDLQSPQLDDVAEEVPVALVYNGISHVVMMASPKDLTHFAMGFSLSEGIIDSPREIYGMDVVPSCNGLEVQIDLSSRRFMGLKARRRALAGRTGCGVCGVEQLNDIGKPVQPLPFSQTFNLGNLDRALKHLNDFQPTGKLTGCTHAAAWVMPSGELAGGHEDVGRHVALDKLLGRRATEGEEWRQGAALVSSRASYEMVQKSAMCGVEILFAVSAATTLAVEVAERCNLTLVGFCKPGRATIYTHPQRLIAD</sequence>
<accession>Q8ZKS7</accession>
<dbReference type="EMBL" id="AE006468">
    <property type="protein sequence ID" value="AAL22877.1"/>
    <property type="molecule type" value="Genomic_DNA"/>
</dbReference>
<dbReference type="RefSeq" id="NP_462918.1">
    <property type="nucleotide sequence ID" value="NC_003197.2"/>
</dbReference>
<dbReference type="RefSeq" id="WP_001059744.1">
    <property type="nucleotide sequence ID" value="NC_003197.2"/>
</dbReference>
<dbReference type="SMR" id="Q8ZKS7"/>
<dbReference type="STRING" id="99287.STM4038"/>
<dbReference type="PaxDb" id="99287-STM4038"/>
<dbReference type="GeneID" id="1255564"/>
<dbReference type="KEGG" id="stm:STM4038"/>
<dbReference type="PATRIC" id="fig|99287.12.peg.4254"/>
<dbReference type="HOGENOM" id="CLU_056887_2_0_6"/>
<dbReference type="OMA" id="RYCAGAT"/>
<dbReference type="PhylomeDB" id="Q8ZKS7"/>
<dbReference type="BioCyc" id="SENT99287:STM4038-MONOMER"/>
<dbReference type="Proteomes" id="UP000001014">
    <property type="component" value="Chromosome"/>
</dbReference>
<dbReference type="GO" id="GO:0005737">
    <property type="term" value="C:cytoplasm"/>
    <property type="evidence" value="ECO:0007669"/>
    <property type="project" value="UniProtKB-SubCell"/>
</dbReference>
<dbReference type="GO" id="GO:0097163">
    <property type="term" value="F:sulfur carrier activity"/>
    <property type="evidence" value="ECO:0000318"/>
    <property type="project" value="GO_Central"/>
</dbReference>
<dbReference type="GO" id="GO:0016783">
    <property type="term" value="F:sulfurtransferase activity"/>
    <property type="evidence" value="ECO:0007669"/>
    <property type="project" value="InterPro"/>
</dbReference>
<dbReference type="GO" id="GO:0006777">
    <property type="term" value="P:Mo-molybdopterin cofactor biosynthetic process"/>
    <property type="evidence" value="ECO:0007669"/>
    <property type="project" value="UniProtKB-UniRule"/>
</dbReference>
<dbReference type="Gene3D" id="3.10.20.10">
    <property type="match status" value="1"/>
</dbReference>
<dbReference type="Gene3D" id="3.40.140.10">
    <property type="entry name" value="Cytidine Deaminase, domain 2"/>
    <property type="match status" value="1"/>
</dbReference>
<dbReference type="HAMAP" id="MF_00187">
    <property type="entry name" value="FdhD"/>
    <property type="match status" value="1"/>
</dbReference>
<dbReference type="InterPro" id="IPR016193">
    <property type="entry name" value="Cytidine_deaminase-like"/>
</dbReference>
<dbReference type="InterPro" id="IPR003786">
    <property type="entry name" value="FdhD"/>
</dbReference>
<dbReference type="NCBIfam" id="TIGR00129">
    <property type="entry name" value="fdhD_narQ"/>
    <property type="match status" value="1"/>
</dbReference>
<dbReference type="PANTHER" id="PTHR30592">
    <property type="entry name" value="FORMATE DEHYDROGENASE"/>
    <property type="match status" value="1"/>
</dbReference>
<dbReference type="PANTHER" id="PTHR30592:SF1">
    <property type="entry name" value="SULFUR CARRIER PROTEIN FDHD"/>
    <property type="match status" value="1"/>
</dbReference>
<dbReference type="Pfam" id="PF02634">
    <property type="entry name" value="FdhD-NarQ"/>
    <property type="match status" value="1"/>
</dbReference>
<dbReference type="PIRSF" id="PIRSF015626">
    <property type="entry name" value="FdhD"/>
    <property type="match status" value="1"/>
</dbReference>
<dbReference type="SUPFAM" id="SSF53927">
    <property type="entry name" value="Cytidine deaminase-like"/>
    <property type="match status" value="1"/>
</dbReference>
<protein>
    <recommendedName>
        <fullName evidence="1">Sulfur carrier protein FdhD</fullName>
    </recommendedName>
</protein>
<reference key="1">
    <citation type="journal article" date="2001" name="Nature">
        <title>Complete genome sequence of Salmonella enterica serovar Typhimurium LT2.</title>
        <authorList>
            <person name="McClelland M."/>
            <person name="Sanderson K.E."/>
            <person name="Spieth J."/>
            <person name="Clifton S.W."/>
            <person name="Latreille P."/>
            <person name="Courtney L."/>
            <person name="Porwollik S."/>
            <person name="Ali J."/>
            <person name="Dante M."/>
            <person name="Du F."/>
            <person name="Hou S."/>
            <person name="Layman D."/>
            <person name="Leonard S."/>
            <person name="Nguyen C."/>
            <person name="Scott K."/>
            <person name="Holmes A."/>
            <person name="Grewal N."/>
            <person name="Mulvaney E."/>
            <person name="Ryan E."/>
            <person name="Sun H."/>
            <person name="Florea L."/>
            <person name="Miller W."/>
            <person name="Stoneking T."/>
            <person name="Nhan M."/>
            <person name="Waterston R."/>
            <person name="Wilson R.K."/>
        </authorList>
    </citation>
    <scope>NUCLEOTIDE SEQUENCE [LARGE SCALE GENOMIC DNA]</scope>
    <source>
        <strain>LT2 / SGSC1412 / ATCC 700720</strain>
    </source>
</reference>
<proteinExistence type="inferred from homology"/>
<gene>
    <name evidence="1" type="primary">fdhD</name>
    <name type="ordered locus">STM4038</name>
</gene>
<name>FDHD_SALTY</name>
<keyword id="KW-0963">Cytoplasm</keyword>
<keyword id="KW-0501">Molybdenum cofactor biosynthesis</keyword>
<keyword id="KW-1185">Reference proteome</keyword>
<evidence type="ECO:0000255" key="1">
    <source>
        <dbReference type="HAMAP-Rule" id="MF_00187"/>
    </source>
</evidence>